<keyword id="KW-0963">Cytoplasm</keyword>
<keyword id="KW-0238">DNA-binding</keyword>
<keyword id="KW-1185">Reference proteome</keyword>
<keyword id="KW-0804">Transcription</keyword>
<keyword id="KW-0805">Transcription regulation</keyword>
<organism>
    <name type="scientific">Pseudoalteromonas translucida (strain TAC 125)</name>
    <dbReference type="NCBI Taxonomy" id="326442"/>
    <lineage>
        <taxon>Bacteria</taxon>
        <taxon>Pseudomonadati</taxon>
        <taxon>Pseudomonadota</taxon>
        <taxon>Gammaproteobacteria</taxon>
        <taxon>Alteromonadales</taxon>
        <taxon>Pseudoalteromonadaceae</taxon>
        <taxon>Pseudoalteromonas</taxon>
    </lineage>
</organism>
<feature type="chain" id="PRO_0000257098" description="Probable transcriptional regulatory protein PSHAa1370">
    <location>
        <begin position="1"/>
        <end position="237"/>
    </location>
</feature>
<dbReference type="EMBL" id="CR954246">
    <property type="protein sequence ID" value="CAI86445.1"/>
    <property type="molecule type" value="Genomic_DNA"/>
</dbReference>
<dbReference type="SMR" id="Q3IL56"/>
<dbReference type="STRING" id="326442.PSHAa1370"/>
<dbReference type="KEGG" id="pha:PSHAa1370"/>
<dbReference type="eggNOG" id="COG0217">
    <property type="taxonomic scope" value="Bacteria"/>
</dbReference>
<dbReference type="HOGENOM" id="CLU_062974_2_0_6"/>
<dbReference type="BioCyc" id="PHAL326442:PSHA_RS06735-MONOMER"/>
<dbReference type="Proteomes" id="UP000006843">
    <property type="component" value="Chromosome I"/>
</dbReference>
<dbReference type="GO" id="GO:0005829">
    <property type="term" value="C:cytosol"/>
    <property type="evidence" value="ECO:0007669"/>
    <property type="project" value="TreeGrafter"/>
</dbReference>
<dbReference type="GO" id="GO:0003677">
    <property type="term" value="F:DNA binding"/>
    <property type="evidence" value="ECO:0007669"/>
    <property type="project" value="UniProtKB-UniRule"/>
</dbReference>
<dbReference type="GO" id="GO:0006355">
    <property type="term" value="P:regulation of DNA-templated transcription"/>
    <property type="evidence" value="ECO:0007669"/>
    <property type="project" value="UniProtKB-UniRule"/>
</dbReference>
<dbReference type="FunFam" id="1.10.10.200:FF:000003">
    <property type="entry name" value="Probable transcriptional regulatory protein YeeN"/>
    <property type="match status" value="1"/>
</dbReference>
<dbReference type="Gene3D" id="1.10.10.200">
    <property type="match status" value="1"/>
</dbReference>
<dbReference type="Gene3D" id="3.30.70.980">
    <property type="match status" value="2"/>
</dbReference>
<dbReference type="HAMAP" id="MF_00693">
    <property type="entry name" value="Transcrip_reg_TACO1"/>
    <property type="match status" value="1"/>
</dbReference>
<dbReference type="InterPro" id="IPR017856">
    <property type="entry name" value="Integrase-like_N"/>
</dbReference>
<dbReference type="InterPro" id="IPR048300">
    <property type="entry name" value="TACO1_YebC-like_2nd/3rd_dom"/>
</dbReference>
<dbReference type="InterPro" id="IPR049083">
    <property type="entry name" value="TACO1_YebC_N"/>
</dbReference>
<dbReference type="InterPro" id="IPR002876">
    <property type="entry name" value="Transcrip_reg_TACO1-like"/>
</dbReference>
<dbReference type="InterPro" id="IPR026564">
    <property type="entry name" value="Transcrip_reg_TACO1-like_dom3"/>
</dbReference>
<dbReference type="InterPro" id="IPR029072">
    <property type="entry name" value="YebC-like"/>
</dbReference>
<dbReference type="NCBIfam" id="NF009044">
    <property type="entry name" value="PRK12378.1"/>
    <property type="match status" value="1"/>
</dbReference>
<dbReference type="PANTHER" id="PTHR12532">
    <property type="entry name" value="TRANSLATIONAL ACTIVATOR OF CYTOCHROME C OXIDASE 1"/>
    <property type="match status" value="1"/>
</dbReference>
<dbReference type="PANTHER" id="PTHR12532:SF0">
    <property type="entry name" value="TRANSLATIONAL ACTIVATOR OF CYTOCHROME C OXIDASE 1"/>
    <property type="match status" value="1"/>
</dbReference>
<dbReference type="Pfam" id="PF20772">
    <property type="entry name" value="TACO1_YebC_N"/>
    <property type="match status" value="1"/>
</dbReference>
<dbReference type="Pfam" id="PF01709">
    <property type="entry name" value="Transcrip_reg"/>
    <property type="match status" value="1"/>
</dbReference>
<dbReference type="SUPFAM" id="SSF75625">
    <property type="entry name" value="YebC-like"/>
    <property type="match status" value="1"/>
</dbReference>
<name>Y1370_PSET1</name>
<comment type="subcellular location">
    <subcellularLocation>
        <location evidence="1">Cytoplasm</location>
    </subcellularLocation>
</comment>
<comment type="similarity">
    <text evidence="1">Belongs to the TACO1 family.</text>
</comment>
<evidence type="ECO:0000255" key="1">
    <source>
        <dbReference type="HAMAP-Rule" id="MF_00693"/>
    </source>
</evidence>
<reference key="1">
    <citation type="journal article" date="2005" name="Genome Res.">
        <title>Coping with cold: the genome of the versatile marine Antarctica bacterium Pseudoalteromonas haloplanktis TAC125.</title>
        <authorList>
            <person name="Medigue C."/>
            <person name="Krin E."/>
            <person name="Pascal G."/>
            <person name="Barbe V."/>
            <person name="Bernsel A."/>
            <person name="Bertin P.N."/>
            <person name="Cheung F."/>
            <person name="Cruveiller S."/>
            <person name="D'Amico S."/>
            <person name="Duilio A."/>
            <person name="Fang G."/>
            <person name="Feller G."/>
            <person name="Ho C."/>
            <person name="Mangenot S."/>
            <person name="Marino G."/>
            <person name="Nilsson J."/>
            <person name="Parrilli E."/>
            <person name="Rocha E.P.C."/>
            <person name="Rouy Z."/>
            <person name="Sekowska A."/>
            <person name="Tutino M.L."/>
            <person name="Vallenet D."/>
            <person name="von Heijne G."/>
            <person name="Danchin A."/>
        </authorList>
    </citation>
    <scope>NUCLEOTIDE SEQUENCE [LARGE SCALE GENOMIC DNA]</scope>
    <source>
        <strain>TAC 125</strain>
    </source>
</reference>
<accession>Q3IL56</accession>
<proteinExistence type="inferred from homology"/>
<protein>
    <recommendedName>
        <fullName evidence="1">Probable transcriptional regulatory protein PSHAa1370</fullName>
    </recommendedName>
</protein>
<gene>
    <name type="ordered locus">PSHAa1370</name>
</gene>
<sequence>MGRAYQNKKDSMAKTAGAKTKVYSKYGKEIYICAKNGGTDPDGNLSLRRLIERAKKDQVPAHVIDRAIDKAKGGGGEDYVATRYEGYGPGNCMIIVDCLTDNNKRTFADVRVCFTKANAKIGAQNSVSHLFDHLAIFVFDGDDDETVLEALMMADVDVTDVEVENGKVTVFAPHTEYNNTRTALEEMGVTEFDEDLISFVPQIAAPIEGEDVEVMERFLAMLEDCDDVQNVYHNAEF</sequence>